<dbReference type="EMBL" id="AE017223">
    <property type="protein sequence ID" value="AAX74161.1"/>
    <property type="molecule type" value="Genomic_DNA"/>
</dbReference>
<dbReference type="RefSeq" id="WP_002963914.1">
    <property type="nucleotide sequence ID" value="NC_006932.1"/>
</dbReference>
<dbReference type="SMR" id="Q57DX3"/>
<dbReference type="EnsemblBacteria" id="AAX74161">
    <property type="protein sequence ID" value="AAX74161"/>
    <property type="gene ID" value="BruAb1_0793"/>
</dbReference>
<dbReference type="KEGG" id="bmb:BruAb1_0793"/>
<dbReference type="HOGENOM" id="CLU_105066_1_1_5"/>
<dbReference type="Proteomes" id="UP000000540">
    <property type="component" value="Chromosome I"/>
</dbReference>
<dbReference type="GO" id="GO:0005829">
    <property type="term" value="C:cytosol"/>
    <property type="evidence" value="ECO:0007669"/>
    <property type="project" value="TreeGrafter"/>
</dbReference>
<dbReference type="GO" id="GO:0003677">
    <property type="term" value="F:DNA binding"/>
    <property type="evidence" value="ECO:0007669"/>
    <property type="project" value="UniProtKB-UniRule"/>
</dbReference>
<dbReference type="GO" id="GO:0030527">
    <property type="term" value="F:structural constituent of chromatin"/>
    <property type="evidence" value="ECO:0007669"/>
    <property type="project" value="InterPro"/>
</dbReference>
<dbReference type="GO" id="GO:0006310">
    <property type="term" value="P:DNA recombination"/>
    <property type="evidence" value="ECO:0007669"/>
    <property type="project" value="UniProtKB-UniRule"/>
</dbReference>
<dbReference type="GO" id="GO:0009893">
    <property type="term" value="P:positive regulation of metabolic process"/>
    <property type="evidence" value="ECO:0007669"/>
    <property type="project" value="UniProtKB-ARBA"/>
</dbReference>
<dbReference type="GO" id="GO:0006355">
    <property type="term" value="P:regulation of DNA-templated transcription"/>
    <property type="evidence" value="ECO:0007669"/>
    <property type="project" value="UniProtKB-UniRule"/>
</dbReference>
<dbReference type="GO" id="GO:0006417">
    <property type="term" value="P:regulation of translation"/>
    <property type="evidence" value="ECO:0007669"/>
    <property type="project" value="UniProtKB-UniRule"/>
</dbReference>
<dbReference type="CDD" id="cd13835">
    <property type="entry name" value="IHF_A"/>
    <property type="match status" value="1"/>
</dbReference>
<dbReference type="Gene3D" id="4.10.520.10">
    <property type="entry name" value="IHF-like DNA-binding proteins"/>
    <property type="match status" value="1"/>
</dbReference>
<dbReference type="HAMAP" id="MF_00380">
    <property type="entry name" value="IHF_alpha"/>
    <property type="match status" value="1"/>
</dbReference>
<dbReference type="InterPro" id="IPR000119">
    <property type="entry name" value="Hist_DNA-bd"/>
</dbReference>
<dbReference type="InterPro" id="IPR020816">
    <property type="entry name" value="Histone-like_DNA-bd_CS"/>
</dbReference>
<dbReference type="InterPro" id="IPR010992">
    <property type="entry name" value="IHF-like_DNA-bd_dom_sf"/>
</dbReference>
<dbReference type="InterPro" id="IPR005684">
    <property type="entry name" value="IHF_alpha"/>
</dbReference>
<dbReference type="NCBIfam" id="TIGR00987">
    <property type="entry name" value="himA"/>
    <property type="match status" value="1"/>
</dbReference>
<dbReference type="NCBIfam" id="NF001401">
    <property type="entry name" value="PRK00285.1"/>
    <property type="match status" value="1"/>
</dbReference>
<dbReference type="PANTHER" id="PTHR33175">
    <property type="entry name" value="DNA-BINDING PROTEIN HU"/>
    <property type="match status" value="1"/>
</dbReference>
<dbReference type="PANTHER" id="PTHR33175:SF2">
    <property type="entry name" value="INTEGRATION HOST FACTOR SUBUNIT ALPHA"/>
    <property type="match status" value="1"/>
</dbReference>
<dbReference type="Pfam" id="PF00216">
    <property type="entry name" value="Bac_DNA_binding"/>
    <property type="match status" value="1"/>
</dbReference>
<dbReference type="PRINTS" id="PR01727">
    <property type="entry name" value="DNABINDINGHU"/>
</dbReference>
<dbReference type="SMART" id="SM00411">
    <property type="entry name" value="BHL"/>
    <property type="match status" value="1"/>
</dbReference>
<dbReference type="SUPFAM" id="SSF47729">
    <property type="entry name" value="IHF-like DNA-binding proteins"/>
    <property type="match status" value="1"/>
</dbReference>
<dbReference type="PROSITE" id="PS00045">
    <property type="entry name" value="HISTONE_LIKE"/>
    <property type="match status" value="1"/>
</dbReference>
<gene>
    <name evidence="1" type="primary">ihfA</name>
    <name evidence="1" type="synonym">himA</name>
    <name type="ordered locus">BruAb1_0793</name>
</gene>
<evidence type="ECO:0000255" key="1">
    <source>
        <dbReference type="HAMAP-Rule" id="MF_00380"/>
    </source>
</evidence>
<accession>Q57DX3</accession>
<comment type="function">
    <text evidence="1">This protein is one of the two subunits of integration host factor, a specific DNA-binding protein that functions in genetic recombination as well as in transcriptional and translational control.</text>
</comment>
<comment type="subunit">
    <text evidence="1">Heterodimer of an alpha and a beta chain.</text>
</comment>
<comment type="similarity">
    <text evidence="1">Belongs to the bacterial histone-like protein family.</text>
</comment>
<sequence length="107" mass="11972">MGGKTVTRADLAEAVYRKVGLSRTESAALVEMILDEVCDAIVNGETVKLSSFATFQVRDKNERIGRNPKTGEEVPILPRRVMTFKASNVLKQRILQEHQKRQGKTSK</sequence>
<feature type="chain" id="PRO_0000277718" description="Integration host factor subunit alpha">
    <location>
        <begin position="1"/>
        <end position="107"/>
    </location>
</feature>
<name>IHFA_BRUAB</name>
<protein>
    <recommendedName>
        <fullName evidence="1">Integration host factor subunit alpha</fullName>
        <shortName evidence="1">IHF-alpha</shortName>
    </recommendedName>
</protein>
<organism>
    <name type="scientific">Brucella abortus biovar 1 (strain 9-941)</name>
    <dbReference type="NCBI Taxonomy" id="262698"/>
    <lineage>
        <taxon>Bacteria</taxon>
        <taxon>Pseudomonadati</taxon>
        <taxon>Pseudomonadota</taxon>
        <taxon>Alphaproteobacteria</taxon>
        <taxon>Hyphomicrobiales</taxon>
        <taxon>Brucellaceae</taxon>
        <taxon>Brucella/Ochrobactrum group</taxon>
        <taxon>Brucella</taxon>
    </lineage>
</organism>
<reference key="1">
    <citation type="journal article" date="2005" name="J. Bacteriol.">
        <title>Completion of the genome sequence of Brucella abortus and comparison to the highly similar genomes of Brucella melitensis and Brucella suis.</title>
        <authorList>
            <person name="Halling S.M."/>
            <person name="Peterson-Burch B.D."/>
            <person name="Bricker B.J."/>
            <person name="Zuerner R.L."/>
            <person name="Qing Z."/>
            <person name="Li L.-L."/>
            <person name="Kapur V."/>
            <person name="Alt D.P."/>
            <person name="Olsen S.C."/>
        </authorList>
    </citation>
    <scope>NUCLEOTIDE SEQUENCE [LARGE SCALE GENOMIC DNA]</scope>
    <source>
        <strain>9-941</strain>
    </source>
</reference>
<proteinExistence type="inferred from homology"/>
<keyword id="KW-0233">DNA recombination</keyword>
<keyword id="KW-0238">DNA-binding</keyword>
<keyword id="KW-0804">Transcription</keyword>
<keyword id="KW-0805">Transcription regulation</keyword>
<keyword id="KW-0810">Translation regulation</keyword>